<evidence type="ECO:0000255" key="1">
    <source>
        <dbReference type="HAMAP-Rule" id="MF_00075"/>
    </source>
</evidence>
<gene>
    <name evidence="1" type="primary">infA</name>
    <name type="ordered locus">A1E_05235</name>
</gene>
<accession>A8F030</accession>
<dbReference type="EMBL" id="CP000409">
    <property type="protein sequence ID" value="ABV73963.1"/>
    <property type="molecule type" value="Genomic_DNA"/>
</dbReference>
<dbReference type="RefSeq" id="WP_012149158.1">
    <property type="nucleotide sequence ID" value="NC_009879.1"/>
</dbReference>
<dbReference type="SMR" id="A8F030"/>
<dbReference type="STRING" id="293613.A1E_05235"/>
<dbReference type="KEGG" id="rcm:A1E_05235"/>
<dbReference type="eggNOG" id="COG0361">
    <property type="taxonomic scope" value="Bacteria"/>
</dbReference>
<dbReference type="HOGENOM" id="CLU_151267_1_0_5"/>
<dbReference type="Proteomes" id="UP000007056">
    <property type="component" value="Chromosome"/>
</dbReference>
<dbReference type="GO" id="GO:0005829">
    <property type="term" value="C:cytosol"/>
    <property type="evidence" value="ECO:0007669"/>
    <property type="project" value="TreeGrafter"/>
</dbReference>
<dbReference type="GO" id="GO:0043022">
    <property type="term" value="F:ribosome binding"/>
    <property type="evidence" value="ECO:0007669"/>
    <property type="project" value="UniProtKB-UniRule"/>
</dbReference>
<dbReference type="GO" id="GO:0019843">
    <property type="term" value="F:rRNA binding"/>
    <property type="evidence" value="ECO:0007669"/>
    <property type="project" value="UniProtKB-UniRule"/>
</dbReference>
<dbReference type="GO" id="GO:0003743">
    <property type="term" value="F:translation initiation factor activity"/>
    <property type="evidence" value="ECO:0007669"/>
    <property type="project" value="UniProtKB-UniRule"/>
</dbReference>
<dbReference type="CDD" id="cd04451">
    <property type="entry name" value="S1_IF1"/>
    <property type="match status" value="1"/>
</dbReference>
<dbReference type="FunFam" id="2.40.50.140:FF:000002">
    <property type="entry name" value="Translation initiation factor IF-1"/>
    <property type="match status" value="1"/>
</dbReference>
<dbReference type="Gene3D" id="2.40.50.140">
    <property type="entry name" value="Nucleic acid-binding proteins"/>
    <property type="match status" value="1"/>
</dbReference>
<dbReference type="HAMAP" id="MF_00075">
    <property type="entry name" value="IF_1"/>
    <property type="match status" value="1"/>
</dbReference>
<dbReference type="InterPro" id="IPR012340">
    <property type="entry name" value="NA-bd_OB-fold"/>
</dbReference>
<dbReference type="InterPro" id="IPR006196">
    <property type="entry name" value="RNA-binding_domain_S1_IF1"/>
</dbReference>
<dbReference type="InterPro" id="IPR004368">
    <property type="entry name" value="TIF_IF1"/>
</dbReference>
<dbReference type="NCBIfam" id="TIGR00008">
    <property type="entry name" value="infA"/>
    <property type="match status" value="1"/>
</dbReference>
<dbReference type="PANTHER" id="PTHR33370">
    <property type="entry name" value="TRANSLATION INITIATION FACTOR IF-1, CHLOROPLASTIC"/>
    <property type="match status" value="1"/>
</dbReference>
<dbReference type="PANTHER" id="PTHR33370:SF1">
    <property type="entry name" value="TRANSLATION INITIATION FACTOR IF-1, CHLOROPLASTIC"/>
    <property type="match status" value="1"/>
</dbReference>
<dbReference type="Pfam" id="PF01176">
    <property type="entry name" value="eIF-1a"/>
    <property type="match status" value="1"/>
</dbReference>
<dbReference type="SUPFAM" id="SSF50249">
    <property type="entry name" value="Nucleic acid-binding proteins"/>
    <property type="match status" value="1"/>
</dbReference>
<dbReference type="PROSITE" id="PS50832">
    <property type="entry name" value="S1_IF1_TYPE"/>
    <property type="match status" value="1"/>
</dbReference>
<name>IF1_RICCK</name>
<feature type="chain" id="PRO_0000338904" description="Translation initiation factor IF-1">
    <location>
        <begin position="1"/>
        <end position="71"/>
    </location>
</feature>
<feature type="domain" description="S1-like" evidence="1">
    <location>
        <begin position="1"/>
        <end position="71"/>
    </location>
</feature>
<organism>
    <name type="scientific">Rickettsia canadensis (strain McKiel)</name>
    <dbReference type="NCBI Taxonomy" id="293613"/>
    <lineage>
        <taxon>Bacteria</taxon>
        <taxon>Pseudomonadati</taxon>
        <taxon>Pseudomonadota</taxon>
        <taxon>Alphaproteobacteria</taxon>
        <taxon>Rickettsiales</taxon>
        <taxon>Rickettsiaceae</taxon>
        <taxon>Rickettsieae</taxon>
        <taxon>Rickettsia</taxon>
        <taxon>belli group</taxon>
    </lineage>
</organism>
<sequence length="71" mass="8238">MSKDDLIQFTGTVLELLPNANFRVKLENDHLIIAHTSGRMRKNRIRILLGDKVTVEMTPYDLTKGRVIHRH</sequence>
<proteinExistence type="inferred from homology"/>
<keyword id="KW-0963">Cytoplasm</keyword>
<keyword id="KW-0396">Initiation factor</keyword>
<keyword id="KW-0648">Protein biosynthesis</keyword>
<keyword id="KW-0694">RNA-binding</keyword>
<keyword id="KW-0699">rRNA-binding</keyword>
<protein>
    <recommendedName>
        <fullName evidence="1">Translation initiation factor IF-1</fullName>
    </recommendedName>
</protein>
<comment type="function">
    <text evidence="1">One of the essential components for the initiation of protein synthesis. Stabilizes the binding of IF-2 and IF-3 on the 30S subunit to which N-formylmethionyl-tRNA(fMet) subsequently binds. Helps modulate mRNA selection, yielding the 30S pre-initiation complex (PIC). Upon addition of the 50S ribosomal subunit IF-1, IF-2 and IF-3 are released leaving the mature 70S translation initiation complex.</text>
</comment>
<comment type="subunit">
    <text evidence="1">Component of the 30S ribosomal translation pre-initiation complex which assembles on the 30S ribosome in the order IF-2 and IF-3, IF-1 and N-formylmethionyl-tRNA(fMet); mRNA recruitment can occur at any time during PIC assembly.</text>
</comment>
<comment type="subcellular location">
    <subcellularLocation>
        <location evidence="1">Cytoplasm</location>
    </subcellularLocation>
</comment>
<comment type="similarity">
    <text evidence="1">Belongs to the IF-1 family.</text>
</comment>
<reference key="1">
    <citation type="submission" date="2007-09" db="EMBL/GenBank/DDBJ databases">
        <title>Complete genome sequence of Rickettsia canadensis.</title>
        <authorList>
            <person name="Madan A."/>
            <person name="Fahey J."/>
            <person name="Helton E."/>
            <person name="Ketteman M."/>
            <person name="Madan A."/>
            <person name="Rodrigues S."/>
            <person name="Sanchez A."/>
            <person name="Whiting M."/>
            <person name="Dasch G."/>
            <person name="Eremeeva M."/>
        </authorList>
    </citation>
    <scope>NUCLEOTIDE SEQUENCE [LARGE SCALE GENOMIC DNA]</scope>
    <source>
        <strain>McKiel</strain>
    </source>
</reference>